<gene>
    <name evidence="1" type="primary">pyrH</name>
    <name type="ordered locus">R01497</name>
    <name type="ORF">SMc02099</name>
</gene>
<feature type="chain" id="PRO_0000143875" description="Uridylate kinase">
    <location>
        <begin position="1"/>
        <end position="240"/>
    </location>
</feature>
<feature type="region of interest" description="Involved in allosteric activation by GTP" evidence="1">
    <location>
        <begin position="21"/>
        <end position="26"/>
    </location>
</feature>
<feature type="binding site" evidence="1">
    <location>
        <begin position="13"/>
        <end position="16"/>
    </location>
    <ligand>
        <name>ATP</name>
        <dbReference type="ChEBI" id="CHEBI:30616"/>
    </ligand>
</feature>
<feature type="binding site" evidence="1">
    <location>
        <position position="55"/>
    </location>
    <ligand>
        <name>UMP</name>
        <dbReference type="ChEBI" id="CHEBI:57865"/>
    </ligand>
</feature>
<feature type="binding site" evidence="1">
    <location>
        <position position="56"/>
    </location>
    <ligand>
        <name>ATP</name>
        <dbReference type="ChEBI" id="CHEBI:30616"/>
    </ligand>
</feature>
<feature type="binding site" evidence="1">
    <location>
        <position position="60"/>
    </location>
    <ligand>
        <name>ATP</name>
        <dbReference type="ChEBI" id="CHEBI:30616"/>
    </ligand>
</feature>
<feature type="binding site" evidence="1">
    <location>
        <position position="75"/>
    </location>
    <ligand>
        <name>UMP</name>
        <dbReference type="ChEBI" id="CHEBI:57865"/>
    </ligand>
</feature>
<feature type="binding site" evidence="1">
    <location>
        <begin position="136"/>
        <end position="143"/>
    </location>
    <ligand>
        <name>UMP</name>
        <dbReference type="ChEBI" id="CHEBI:57865"/>
    </ligand>
</feature>
<feature type="binding site" evidence="1">
    <location>
        <position position="163"/>
    </location>
    <ligand>
        <name>ATP</name>
        <dbReference type="ChEBI" id="CHEBI:30616"/>
    </ligand>
</feature>
<feature type="binding site" evidence="1">
    <location>
        <position position="164"/>
    </location>
    <ligand>
        <name>ATP</name>
        <dbReference type="ChEBI" id="CHEBI:30616"/>
    </ligand>
</feature>
<feature type="binding site" evidence="1">
    <location>
        <position position="169"/>
    </location>
    <ligand>
        <name>ATP</name>
        <dbReference type="ChEBI" id="CHEBI:30616"/>
    </ligand>
</feature>
<feature type="binding site" evidence="1">
    <location>
        <position position="172"/>
    </location>
    <ligand>
        <name>ATP</name>
        <dbReference type="ChEBI" id="CHEBI:30616"/>
    </ligand>
</feature>
<organism>
    <name type="scientific">Rhizobium meliloti (strain 1021)</name>
    <name type="common">Ensifer meliloti</name>
    <name type="synonym">Sinorhizobium meliloti</name>
    <dbReference type="NCBI Taxonomy" id="266834"/>
    <lineage>
        <taxon>Bacteria</taxon>
        <taxon>Pseudomonadati</taxon>
        <taxon>Pseudomonadota</taxon>
        <taxon>Alphaproteobacteria</taxon>
        <taxon>Hyphomicrobiales</taxon>
        <taxon>Rhizobiaceae</taxon>
        <taxon>Sinorhizobium/Ensifer group</taxon>
        <taxon>Sinorhizobium</taxon>
    </lineage>
</organism>
<accession>Q92Q53</accession>
<name>PYRH_RHIME</name>
<evidence type="ECO:0000255" key="1">
    <source>
        <dbReference type="HAMAP-Rule" id="MF_01220"/>
    </source>
</evidence>
<proteinExistence type="inferred from homology"/>
<reference key="1">
    <citation type="journal article" date="2001" name="Proc. Natl. Acad. Sci. U.S.A.">
        <title>Analysis of the chromosome sequence of the legume symbiont Sinorhizobium meliloti strain 1021.</title>
        <authorList>
            <person name="Capela D."/>
            <person name="Barloy-Hubler F."/>
            <person name="Gouzy J."/>
            <person name="Bothe G."/>
            <person name="Ampe F."/>
            <person name="Batut J."/>
            <person name="Boistard P."/>
            <person name="Becker A."/>
            <person name="Boutry M."/>
            <person name="Cadieu E."/>
            <person name="Dreano S."/>
            <person name="Gloux S."/>
            <person name="Godrie T."/>
            <person name="Goffeau A."/>
            <person name="Kahn D."/>
            <person name="Kiss E."/>
            <person name="Lelaure V."/>
            <person name="Masuy D."/>
            <person name="Pohl T."/>
            <person name="Portetelle D."/>
            <person name="Puehler A."/>
            <person name="Purnelle B."/>
            <person name="Ramsperger U."/>
            <person name="Renard C."/>
            <person name="Thebault P."/>
            <person name="Vandenbol M."/>
            <person name="Weidner S."/>
            <person name="Galibert F."/>
        </authorList>
    </citation>
    <scope>NUCLEOTIDE SEQUENCE [LARGE SCALE GENOMIC DNA]</scope>
    <source>
        <strain>1021</strain>
    </source>
</reference>
<reference key="2">
    <citation type="journal article" date="2001" name="Science">
        <title>The composite genome of the legume symbiont Sinorhizobium meliloti.</title>
        <authorList>
            <person name="Galibert F."/>
            <person name="Finan T.M."/>
            <person name="Long S.R."/>
            <person name="Puehler A."/>
            <person name="Abola P."/>
            <person name="Ampe F."/>
            <person name="Barloy-Hubler F."/>
            <person name="Barnett M.J."/>
            <person name="Becker A."/>
            <person name="Boistard P."/>
            <person name="Bothe G."/>
            <person name="Boutry M."/>
            <person name="Bowser L."/>
            <person name="Buhrmester J."/>
            <person name="Cadieu E."/>
            <person name="Capela D."/>
            <person name="Chain P."/>
            <person name="Cowie A."/>
            <person name="Davis R.W."/>
            <person name="Dreano S."/>
            <person name="Federspiel N.A."/>
            <person name="Fisher R.F."/>
            <person name="Gloux S."/>
            <person name="Godrie T."/>
            <person name="Goffeau A."/>
            <person name="Golding B."/>
            <person name="Gouzy J."/>
            <person name="Gurjal M."/>
            <person name="Hernandez-Lucas I."/>
            <person name="Hong A."/>
            <person name="Huizar L."/>
            <person name="Hyman R.W."/>
            <person name="Jones T."/>
            <person name="Kahn D."/>
            <person name="Kahn M.L."/>
            <person name="Kalman S."/>
            <person name="Keating D.H."/>
            <person name="Kiss E."/>
            <person name="Komp C."/>
            <person name="Lelaure V."/>
            <person name="Masuy D."/>
            <person name="Palm C."/>
            <person name="Peck M.C."/>
            <person name="Pohl T.M."/>
            <person name="Portetelle D."/>
            <person name="Purnelle B."/>
            <person name="Ramsperger U."/>
            <person name="Surzycki R."/>
            <person name="Thebault P."/>
            <person name="Vandenbol M."/>
            <person name="Vorhoelter F.J."/>
            <person name="Weidner S."/>
            <person name="Wells D.H."/>
            <person name="Wong K."/>
            <person name="Yeh K.-C."/>
            <person name="Batut J."/>
        </authorList>
    </citation>
    <scope>NUCLEOTIDE SEQUENCE [LARGE SCALE GENOMIC DNA]</scope>
    <source>
        <strain>1021</strain>
    </source>
</reference>
<protein>
    <recommendedName>
        <fullName evidence="1">Uridylate kinase</fullName>
        <shortName evidence="1">UK</shortName>
        <ecNumber evidence="1">2.7.4.22</ecNumber>
    </recommendedName>
    <alternativeName>
        <fullName evidence="1">Uridine monophosphate kinase</fullName>
        <shortName evidence="1">UMP kinase</shortName>
        <shortName evidence="1">UMPK</shortName>
    </alternativeName>
</protein>
<comment type="function">
    <text evidence="1">Catalyzes the reversible phosphorylation of UMP to UDP.</text>
</comment>
<comment type="catalytic activity">
    <reaction evidence="1">
        <text>UMP + ATP = UDP + ADP</text>
        <dbReference type="Rhea" id="RHEA:24400"/>
        <dbReference type="ChEBI" id="CHEBI:30616"/>
        <dbReference type="ChEBI" id="CHEBI:57865"/>
        <dbReference type="ChEBI" id="CHEBI:58223"/>
        <dbReference type="ChEBI" id="CHEBI:456216"/>
        <dbReference type="EC" id="2.7.4.22"/>
    </reaction>
</comment>
<comment type="activity regulation">
    <text evidence="1">Allosterically activated by GTP. Inhibited by UTP.</text>
</comment>
<comment type="pathway">
    <text evidence="1">Pyrimidine metabolism; CTP biosynthesis via de novo pathway; UDP from UMP (UMPK route): step 1/1.</text>
</comment>
<comment type="subunit">
    <text evidence="1">Homohexamer.</text>
</comment>
<comment type="subcellular location">
    <subcellularLocation>
        <location evidence="1">Cytoplasm</location>
    </subcellularLocation>
</comment>
<comment type="similarity">
    <text evidence="1">Belongs to the UMP kinase family.</text>
</comment>
<dbReference type="EC" id="2.7.4.22" evidence="1"/>
<dbReference type="EMBL" id="AL591688">
    <property type="protein sequence ID" value="CAC46076.1"/>
    <property type="molecule type" value="Genomic_DNA"/>
</dbReference>
<dbReference type="RefSeq" id="NP_385603.1">
    <property type="nucleotide sequence ID" value="NC_003047.1"/>
</dbReference>
<dbReference type="RefSeq" id="WP_003534989.1">
    <property type="nucleotide sequence ID" value="NC_003047.1"/>
</dbReference>
<dbReference type="SMR" id="Q92Q53"/>
<dbReference type="EnsemblBacteria" id="CAC46076">
    <property type="protein sequence ID" value="CAC46076"/>
    <property type="gene ID" value="SMc02099"/>
</dbReference>
<dbReference type="GeneID" id="89575821"/>
<dbReference type="KEGG" id="sme:SMc02099"/>
<dbReference type="PATRIC" id="fig|266834.11.peg.2917"/>
<dbReference type="eggNOG" id="COG0528">
    <property type="taxonomic scope" value="Bacteria"/>
</dbReference>
<dbReference type="HOGENOM" id="CLU_033861_0_0_5"/>
<dbReference type="OrthoDB" id="9807458at2"/>
<dbReference type="UniPathway" id="UPA00159">
    <property type="reaction ID" value="UER00275"/>
</dbReference>
<dbReference type="Proteomes" id="UP000001976">
    <property type="component" value="Chromosome"/>
</dbReference>
<dbReference type="GO" id="GO:0005829">
    <property type="term" value="C:cytosol"/>
    <property type="evidence" value="ECO:0007669"/>
    <property type="project" value="TreeGrafter"/>
</dbReference>
<dbReference type="GO" id="GO:0005524">
    <property type="term" value="F:ATP binding"/>
    <property type="evidence" value="ECO:0007669"/>
    <property type="project" value="UniProtKB-KW"/>
</dbReference>
<dbReference type="GO" id="GO:0033862">
    <property type="term" value="F:UMP kinase activity"/>
    <property type="evidence" value="ECO:0007669"/>
    <property type="project" value="UniProtKB-EC"/>
</dbReference>
<dbReference type="GO" id="GO:0044210">
    <property type="term" value="P:'de novo' CTP biosynthetic process"/>
    <property type="evidence" value="ECO:0007669"/>
    <property type="project" value="UniProtKB-UniRule"/>
</dbReference>
<dbReference type="GO" id="GO:0006225">
    <property type="term" value="P:UDP biosynthetic process"/>
    <property type="evidence" value="ECO:0007669"/>
    <property type="project" value="TreeGrafter"/>
</dbReference>
<dbReference type="CDD" id="cd04254">
    <property type="entry name" value="AAK_UMPK-PyrH-Ec"/>
    <property type="match status" value="1"/>
</dbReference>
<dbReference type="FunFam" id="3.40.1160.10:FF:000001">
    <property type="entry name" value="Uridylate kinase"/>
    <property type="match status" value="1"/>
</dbReference>
<dbReference type="Gene3D" id="3.40.1160.10">
    <property type="entry name" value="Acetylglutamate kinase-like"/>
    <property type="match status" value="1"/>
</dbReference>
<dbReference type="HAMAP" id="MF_01220_B">
    <property type="entry name" value="PyrH_B"/>
    <property type="match status" value="1"/>
</dbReference>
<dbReference type="InterPro" id="IPR036393">
    <property type="entry name" value="AceGlu_kinase-like_sf"/>
</dbReference>
<dbReference type="InterPro" id="IPR001048">
    <property type="entry name" value="Asp/Glu/Uridylate_kinase"/>
</dbReference>
<dbReference type="InterPro" id="IPR011817">
    <property type="entry name" value="Uridylate_kinase"/>
</dbReference>
<dbReference type="InterPro" id="IPR015963">
    <property type="entry name" value="Uridylate_kinase_bac"/>
</dbReference>
<dbReference type="NCBIfam" id="TIGR02075">
    <property type="entry name" value="pyrH_bact"/>
    <property type="match status" value="1"/>
</dbReference>
<dbReference type="PANTHER" id="PTHR42833">
    <property type="entry name" value="URIDYLATE KINASE"/>
    <property type="match status" value="1"/>
</dbReference>
<dbReference type="PANTHER" id="PTHR42833:SF4">
    <property type="entry name" value="URIDYLATE KINASE PUMPKIN, CHLOROPLASTIC"/>
    <property type="match status" value="1"/>
</dbReference>
<dbReference type="Pfam" id="PF00696">
    <property type="entry name" value="AA_kinase"/>
    <property type="match status" value="1"/>
</dbReference>
<dbReference type="PIRSF" id="PIRSF005650">
    <property type="entry name" value="Uridylate_kin"/>
    <property type="match status" value="1"/>
</dbReference>
<dbReference type="SUPFAM" id="SSF53633">
    <property type="entry name" value="Carbamate kinase-like"/>
    <property type="match status" value="1"/>
</dbReference>
<sequence>MSAKPIYKRVLLKASGEALMGSQGFGIDVAVADRIASDIAEARAMGVEVGVVVGGGNIFRGVAVASKGGDRVTGDHMGMLATVINALALATSLRKLDIDTVVLSAIAMPEICESFSQRATLYHLSLGRVVIFAGGTGNPFFTTDSAAALRAAEMGAEAIFKGTQVDGIYSADPKKDPSATRFDRLTHSEILEKGLAVMDVAAVALARENAIPIVVFSIHEKGGFTEILTGGGRATIVTDN</sequence>
<keyword id="KW-0021">Allosteric enzyme</keyword>
<keyword id="KW-0067">ATP-binding</keyword>
<keyword id="KW-0963">Cytoplasm</keyword>
<keyword id="KW-0418">Kinase</keyword>
<keyword id="KW-0547">Nucleotide-binding</keyword>
<keyword id="KW-0665">Pyrimidine biosynthesis</keyword>
<keyword id="KW-1185">Reference proteome</keyword>
<keyword id="KW-0808">Transferase</keyword>